<sequence>MGSLSIWHWIVVIAVVLLLFGRGKISDLMGDVAQGIKAFKKGMQDDDKAPEKTEPVKSIDHGATPSATRTDVGSKAV</sequence>
<comment type="function">
    <text evidence="1">Part of the twin-arginine translocation (Tat) system that transports large folded proteins containing a characteristic twin-arginine motif in their signal peptide across membranes. TatA could form the protein-conducting channel of the Tat system.</text>
</comment>
<comment type="subunit">
    <text evidence="1">The Tat system comprises two distinct complexes: a TatABC complex, containing multiple copies of TatA, TatB and TatC subunits, and a separate TatA complex, containing only TatA subunits. Substrates initially bind to the TatABC complex, which probably triggers association of the separate TatA complex to form the active translocon.</text>
</comment>
<comment type="subcellular location">
    <subcellularLocation>
        <location evidence="1">Cell inner membrane</location>
        <topology evidence="1">Single-pass membrane protein</topology>
    </subcellularLocation>
</comment>
<comment type="similarity">
    <text evidence="1">Belongs to the TatA/E family.</text>
</comment>
<evidence type="ECO:0000255" key="1">
    <source>
        <dbReference type="HAMAP-Rule" id="MF_00236"/>
    </source>
</evidence>
<evidence type="ECO:0000256" key="2">
    <source>
        <dbReference type="SAM" id="MobiDB-lite"/>
    </source>
</evidence>
<proteinExistence type="inferred from homology"/>
<organism>
    <name type="scientific">Bradyrhizobium sp. (strain BTAi1 / ATCC BAA-1182)</name>
    <dbReference type="NCBI Taxonomy" id="288000"/>
    <lineage>
        <taxon>Bacteria</taxon>
        <taxon>Pseudomonadati</taxon>
        <taxon>Pseudomonadota</taxon>
        <taxon>Alphaproteobacteria</taxon>
        <taxon>Hyphomicrobiales</taxon>
        <taxon>Nitrobacteraceae</taxon>
        <taxon>Bradyrhizobium</taxon>
    </lineage>
</organism>
<keyword id="KW-0997">Cell inner membrane</keyword>
<keyword id="KW-1003">Cell membrane</keyword>
<keyword id="KW-0472">Membrane</keyword>
<keyword id="KW-0653">Protein transport</keyword>
<keyword id="KW-1185">Reference proteome</keyword>
<keyword id="KW-0811">Translocation</keyword>
<keyword id="KW-0812">Transmembrane</keyword>
<keyword id="KW-1133">Transmembrane helix</keyword>
<keyword id="KW-0813">Transport</keyword>
<dbReference type="EMBL" id="CP000494">
    <property type="protein sequence ID" value="ABQ36456.1"/>
    <property type="molecule type" value="Genomic_DNA"/>
</dbReference>
<dbReference type="RefSeq" id="WP_006614346.1">
    <property type="nucleotide sequence ID" value="NC_009485.1"/>
</dbReference>
<dbReference type="SMR" id="A5EJW2"/>
<dbReference type="STRING" id="288000.BBta_4417"/>
<dbReference type="KEGG" id="bbt:BBta_4417"/>
<dbReference type="eggNOG" id="COG1826">
    <property type="taxonomic scope" value="Bacteria"/>
</dbReference>
<dbReference type="HOGENOM" id="CLU_086034_5_0_5"/>
<dbReference type="OrthoDB" id="7161179at2"/>
<dbReference type="Proteomes" id="UP000000246">
    <property type="component" value="Chromosome"/>
</dbReference>
<dbReference type="GO" id="GO:0033281">
    <property type="term" value="C:TAT protein transport complex"/>
    <property type="evidence" value="ECO:0007669"/>
    <property type="project" value="UniProtKB-UniRule"/>
</dbReference>
<dbReference type="GO" id="GO:0008320">
    <property type="term" value="F:protein transmembrane transporter activity"/>
    <property type="evidence" value="ECO:0007669"/>
    <property type="project" value="UniProtKB-UniRule"/>
</dbReference>
<dbReference type="GO" id="GO:0043953">
    <property type="term" value="P:protein transport by the Tat complex"/>
    <property type="evidence" value="ECO:0007669"/>
    <property type="project" value="UniProtKB-UniRule"/>
</dbReference>
<dbReference type="Gene3D" id="1.20.5.3310">
    <property type="match status" value="1"/>
</dbReference>
<dbReference type="HAMAP" id="MF_00236">
    <property type="entry name" value="TatA_E"/>
    <property type="match status" value="1"/>
</dbReference>
<dbReference type="InterPro" id="IPR003369">
    <property type="entry name" value="TatA/B/E"/>
</dbReference>
<dbReference type="InterPro" id="IPR006312">
    <property type="entry name" value="TatA/E"/>
</dbReference>
<dbReference type="NCBIfam" id="NF001940">
    <property type="entry name" value="PRK00720.1"/>
    <property type="match status" value="1"/>
</dbReference>
<dbReference type="NCBIfam" id="TIGR01411">
    <property type="entry name" value="tatAE"/>
    <property type="match status" value="1"/>
</dbReference>
<dbReference type="PANTHER" id="PTHR42982">
    <property type="entry name" value="SEC-INDEPENDENT PROTEIN TRANSLOCASE PROTEIN TATA"/>
    <property type="match status" value="1"/>
</dbReference>
<dbReference type="PANTHER" id="PTHR42982:SF1">
    <property type="entry name" value="SEC-INDEPENDENT PROTEIN TRANSLOCASE PROTEIN TATA"/>
    <property type="match status" value="1"/>
</dbReference>
<dbReference type="Pfam" id="PF02416">
    <property type="entry name" value="TatA_B_E"/>
    <property type="match status" value="1"/>
</dbReference>
<reference key="1">
    <citation type="journal article" date="2007" name="Science">
        <title>Legumes symbioses: absence of nod genes in photosynthetic bradyrhizobia.</title>
        <authorList>
            <person name="Giraud E."/>
            <person name="Moulin L."/>
            <person name="Vallenet D."/>
            <person name="Barbe V."/>
            <person name="Cytryn E."/>
            <person name="Avarre J.-C."/>
            <person name="Jaubert M."/>
            <person name="Simon D."/>
            <person name="Cartieaux F."/>
            <person name="Prin Y."/>
            <person name="Bena G."/>
            <person name="Hannibal L."/>
            <person name="Fardoux J."/>
            <person name="Kojadinovic M."/>
            <person name="Vuillet L."/>
            <person name="Lajus A."/>
            <person name="Cruveiller S."/>
            <person name="Rouy Z."/>
            <person name="Mangenot S."/>
            <person name="Segurens B."/>
            <person name="Dossat C."/>
            <person name="Franck W.L."/>
            <person name="Chang W.-S."/>
            <person name="Saunders E."/>
            <person name="Bruce D."/>
            <person name="Richardson P."/>
            <person name="Normand P."/>
            <person name="Dreyfus B."/>
            <person name="Pignol D."/>
            <person name="Stacey G."/>
            <person name="Emerich D."/>
            <person name="Vermeglio A."/>
            <person name="Medigue C."/>
            <person name="Sadowsky M."/>
        </authorList>
    </citation>
    <scope>NUCLEOTIDE SEQUENCE [LARGE SCALE GENOMIC DNA]</scope>
    <source>
        <strain>BTAi1 / ATCC BAA-1182</strain>
    </source>
</reference>
<feature type="chain" id="PRO_1000044358" description="Sec-independent protein translocase protein TatA">
    <location>
        <begin position="1"/>
        <end position="77"/>
    </location>
</feature>
<feature type="transmembrane region" description="Helical" evidence="1">
    <location>
        <begin position="1"/>
        <end position="21"/>
    </location>
</feature>
<feature type="region of interest" description="Disordered" evidence="2">
    <location>
        <begin position="43"/>
        <end position="77"/>
    </location>
</feature>
<feature type="compositionally biased region" description="Basic and acidic residues" evidence="2">
    <location>
        <begin position="43"/>
        <end position="60"/>
    </location>
</feature>
<gene>
    <name evidence="1" type="primary">tatA</name>
    <name type="ordered locus">BBta_4417</name>
</gene>
<accession>A5EJW2</accession>
<name>TATA_BRASB</name>
<protein>
    <recommendedName>
        <fullName evidence="1">Sec-independent protein translocase protein TatA</fullName>
    </recommendedName>
</protein>